<proteinExistence type="inferred from homology"/>
<sequence length="444" mass="47036">MTTRQPLYKSLYFQVIVAICIGIALGHYYPQFGVAVKPLGDGFIKLIKMIIAPIIFCTVVSGIAGMQNMKSVGKTGGYALLYFEIVSTIALLVGLIVVNIVQPGNGMHIDVSTLDASKVATYVAQGADQSVVGFLLNVIPTTIVGAFATGDILQVLMFSVIFGFALHRLGAYGKPILDFIDRFAHVMFNIINMIMKLAPIGAFGAMAFTIGAYGVGSLVQLGQLMICFYITCLAFILIVLGGIARMHGFSVLKMIRYIREELLIVLGTSSSESVLPRMLIKMERLGAKKSVVGLVIPTGYSFNLDGTAIYLTMAAVFIAQATDTHMDITHQITLLVVLLLSSKGAAGVTGSGFIVLAATLSAVGHLPVAGLALILGIDRFMSEARALTNLVGNAVATIVVAKWVKELDTDVLDAELASGGRGIADTRPEDDLGVAEGPTPSNVK</sequence>
<organism>
    <name type="scientific">Pseudomonas fluorescens (strain Pf0-1)</name>
    <dbReference type="NCBI Taxonomy" id="205922"/>
    <lineage>
        <taxon>Bacteria</taxon>
        <taxon>Pseudomonadati</taxon>
        <taxon>Pseudomonadota</taxon>
        <taxon>Gammaproteobacteria</taxon>
        <taxon>Pseudomonadales</taxon>
        <taxon>Pseudomonadaceae</taxon>
        <taxon>Pseudomonas</taxon>
    </lineage>
</organism>
<gene>
    <name evidence="1" type="primary">dctA</name>
    <name type="ordered locus">Pfl01_4236</name>
</gene>
<evidence type="ECO:0000255" key="1">
    <source>
        <dbReference type="HAMAP-Rule" id="MF_01300"/>
    </source>
</evidence>
<evidence type="ECO:0000256" key="2">
    <source>
        <dbReference type="SAM" id="MobiDB-lite"/>
    </source>
</evidence>
<accession>Q3K8D1</accession>
<protein>
    <recommendedName>
        <fullName evidence="1">C4-dicarboxylate transport protein</fullName>
    </recommendedName>
</protein>
<keyword id="KW-0997">Cell inner membrane</keyword>
<keyword id="KW-1003">Cell membrane</keyword>
<keyword id="KW-0472">Membrane</keyword>
<keyword id="KW-0769">Symport</keyword>
<keyword id="KW-0812">Transmembrane</keyword>
<keyword id="KW-1133">Transmembrane helix</keyword>
<keyword id="KW-0813">Transport</keyword>
<name>DCTA_PSEPF</name>
<dbReference type="EMBL" id="CP000094">
    <property type="protein sequence ID" value="ABA75973.1"/>
    <property type="molecule type" value="Genomic_DNA"/>
</dbReference>
<dbReference type="RefSeq" id="WP_007957758.1">
    <property type="nucleotide sequence ID" value="NC_007492.2"/>
</dbReference>
<dbReference type="SMR" id="Q3K8D1"/>
<dbReference type="KEGG" id="pfo:Pfl01_4236"/>
<dbReference type="eggNOG" id="COG1301">
    <property type="taxonomic scope" value="Bacteria"/>
</dbReference>
<dbReference type="HOGENOM" id="CLU_019375_7_0_6"/>
<dbReference type="Proteomes" id="UP000002704">
    <property type="component" value="Chromosome"/>
</dbReference>
<dbReference type="GO" id="GO:0005886">
    <property type="term" value="C:plasma membrane"/>
    <property type="evidence" value="ECO:0007669"/>
    <property type="project" value="UniProtKB-SubCell"/>
</dbReference>
<dbReference type="GO" id="GO:0015138">
    <property type="term" value="F:fumarate transmembrane transporter activity"/>
    <property type="evidence" value="ECO:0007669"/>
    <property type="project" value="TreeGrafter"/>
</dbReference>
<dbReference type="GO" id="GO:0015366">
    <property type="term" value="F:malate:proton symporter activity"/>
    <property type="evidence" value="ECO:0007669"/>
    <property type="project" value="TreeGrafter"/>
</dbReference>
<dbReference type="GO" id="GO:0015141">
    <property type="term" value="F:succinate transmembrane transporter activity"/>
    <property type="evidence" value="ECO:0007669"/>
    <property type="project" value="TreeGrafter"/>
</dbReference>
<dbReference type="GO" id="GO:0070778">
    <property type="term" value="P:L-aspartate transmembrane transport"/>
    <property type="evidence" value="ECO:0007669"/>
    <property type="project" value="TreeGrafter"/>
</dbReference>
<dbReference type="FunFam" id="1.10.3860.10:FF:000001">
    <property type="entry name" value="C4-dicarboxylate transport protein"/>
    <property type="match status" value="1"/>
</dbReference>
<dbReference type="Gene3D" id="1.10.3860.10">
    <property type="entry name" value="Sodium:dicarboxylate symporter"/>
    <property type="match status" value="1"/>
</dbReference>
<dbReference type="HAMAP" id="MF_01300">
    <property type="entry name" value="C4_dicarb_transport"/>
    <property type="match status" value="1"/>
</dbReference>
<dbReference type="InterPro" id="IPR023954">
    <property type="entry name" value="C4_dicarb_transport"/>
</dbReference>
<dbReference type="InterPro" id="IPR001991">
    <property type="entry name" value="Na-dicarboxylate_symporter"/>
</dbReference>
<dbReference type="InterPro" id="IPR018107">
    <property type="entry name" value="Na-dicarboxylate_symporter_CS"/>
</dbReference>
<dbReference type="InterPro" id="IPR036458">
    <property type="entry name" value="Na:dicarbo_symporter_sf"/>
</dbReference>
<dbReference type="NCBIfam" id="NF002461">
    <property type="entry name" value="PRK01663.1"/>
    <property type="match status" value="1"/>
</dbReference>
<dbReference type="NCBIfam" id="NF009587">
    <property type="entry name" value="PRK13027.1"/>
    <property type="match status" value="1"/>
</dbReference>
<dbReference type="PANTHER" id="PTHR42865:SF1">
    <property type="entry name" value="AEROBIC C4-DICARBOXYLATE TRANSPORT PROTEIN"/>
    <property type="match status" value="1"/>
</dbReference>
<dbReference type="PANTHER" id="PTHR42865">
    <property type="entry name" value="PROTON/GLUTAMATE-ASPARTATE SYMPORTER"/>
    <property type="match status" value="1"/>
</dbReference>
<dbReference type="Pfam" id="PF00375">
    <property type="entry name" value="SDF"/>
    <property type="match status" value="1"/>
</dbReference>
<dbReference type="PRINTS" id="PR00173">
    <property type="entry name" value="EDTRNSPORT"/>
</dbReference>
<dbReference type="SUPFAM" id="SSF118215">
    <property type="entry name" value="Proton glutamate symport protein"/>
    <property type="match status" value="1"/>
</dbReference>
<dbReference type="PROSITE" id="PS00713">
    <property type="entry name" value="NA_DICARBOXYL_SYMP_1"/>
    <property type="match status" value="1"/>
</dbReference>
<dbReference type="PROSITE" id="PS00714">
    <property type="entry name" value="NA_DICARBOXYL_SYMP_2"/>
    <property type="match status" value="1"/>
</dbReference>
<feature type="chain" id="PRO_1000067456" description="C4-dicarboxylate transport protein">
    <location>
        <begin position="1"/>
        <end position="444"/>
    </location>
</feature>
<feature type="transmembrane region" description="Helical" evidence="1">
    <location>
        <begin position="15"/>
        <end position="35"/>
    </location>
</feature>
<feature type="transmembrane region" description="Helical" evidence="1">
    <location>
        <begin position="46"/>
        <end position="66"/>
    </location>
</feature>
<feature type="transmembrane region" description="Helical" evidence="1">
    <location>
        <begin position="78"/>
        <end position="98"/>
    </location>
</feature>
<feature type="transmembrane region" description="Helical" evidence="1">
    <location>
        <begin position="143"/>
        <end position="163"/>
    </location>
</feature>
<feature type="transmembrane region" description="Helical" evidence="1">
    <location>
        <begin position="199"/>
        <end position="219"/>
    </location>
</feature>
<feature type="transmembrane region" description="Helical" evidence="1">
    <location>
        <begin position="224"/>
        <end position="244"/>
    </location>
</feature>
<feature type="transmembrane region" description="Helical" evidence="1">
    <location>
        <begin position="291"/>
        <end position="311"/>
    </location>
</feature>
<feature type="transmembrane region" description="Helical" evidence="1">
    <location>
        <begin position="332"/>
        <end position="352"/>
    </location>
</feature>
<feature type="transmembrane region" description="Helical" evidence="1">
    <location>
        <begin position="354"/>
        <end position="374"/>
    </location>
</feature>
<feature type="region of interest" description="Disordered" evidence="2">
    <location>
        <begin position="422"/>
        <end position="444"/>
    </location>
</feature>
<reference key="1">
    <citation type="journal article" date="2009" name="Genome Biol.">
        <title>Genomic and genetic analyses of diversity and plant interactions of Pseudomonas fluorescens.</title>
        <authorList>
            <person name="Silby M.W."/>
            <person name="Cerdeno-Tarraga A.M."/>
            <person name="Vernikos G.S."/>
            <person name="Giddens S.R."/>
            <person name="Jackson R.W."/>
            <person name="Preston G.M."/>
            <person name="Zhang X.-X."/>
            <person name="Moon C.D."/>
            <person name="Gehrig S.M."/>
            <person name="Godfrey S.A.C."/>
            <person name="Knight C.G."/>
            <person name="Malone J.G."/>
            <person name="Robinson Z."/>
            <person name="Spiers A.J."/>
            <person name="Harris S."/>
            <person name="Challis G.L."/>
            <person name="Yaxley A.M."/>
            <person name="Harris D."/>
            <person name="Seeger K."/>
            <person name="Murphy L."/>
            <person name="Rutter S."/>
            <person name="Squares R."/>
            <person name="Quail M.A."/>
            <person name="Saunders E."/>
            <person name="Mavromatis K."/>
            <person name="Brettin T.S."/>
            <person name="Bentley S.D."/>
            <person name="Hothersall J."/>
            <person name="Stephens E."/>
            <person name="Thomas C.M."/>
            <person name="Parkhill J."/>
            <person name="Levy S.B."/>
            <person name="Rainey P.B."/>
            <person name="Thomson N.R."/>
        </authorList>
    </citation>
    <scope>NUCLEOTIDE SEQUENCE [LARGE SCALE GENOMIC DNA]</scope>
    <source>
        <strain>Pf0-1</strain>
    </source>
</reference>
<comment type="function">
    <text evidence="1">Responsible for the transport of dicarboxylates such as succinate, fumarate, and malate from the periplasm across the membrane.</text>
</comment>
<comment type="subcellular location">
    <subcellularLocation>
        <location evidence="1">Cell inner membrane</location>
        <topology evidence="1">Multi-pass membrane protein</topology>
    </subcellularLocation>
</comment>
<comment type="similarity">
    <text evidence="1">Belongs to the dicarboxylate/amino acid:cation symporter (DAACS) (TC 2.A.23) family.</text>
</comment>